<protein>
    <recommendedName>
        <fullName evidence="6">HTH-type transcriptional activator CfaD</fullName>
    </recommendedName>
    <alternativeName>
        <fullName>CFA/I fimbrial subunit D</fullName>
    </alternativeName>
    <alternativeName>
        <fullName>Colonization factor antigen I subunit D</fullName>
    </alternativeName>
</protein>
<gene>
    <name evidence="5" type="primary">cfaD</name>
</gene>
<reference key="1">
    <citation type="journal article" date="1990" name="Microb. Pathog.">
        <title>Expression of CFA/I fimbriae is positively regulated.</title>
        <authorList>
            <person name="Savelkoul P.H.M."/>
            <person name="Willshaw G.A."/>
            <person name="McConnell M.M."/>
            <person name="Smith H.R."/>
            <person name="Hamers A.M."/>
            <person name="van der Zeijst B.A.M."/>
            <person name="Gaastra W."/>
        </authorList>
    </citation>
    <scope>NUCLEOTIDE SEQUENCE [GENOMIC DNA]</scope>
    <scope>FUNCTION</scope>
    <source>
        <strain>E7473/0 / ETEC</strain>
        <plasmid>NTP113</plasmid>
        <plasmid>NTP503</plasmid>
    </source>
</reference>
<reference key="2">
    <citation type="journal article" date="1992" name="EMBO J.">
        <title>The positive regulator CfaD overcomes the repression mediated by histone-like protein H-NS (H1) in the CFA/I fimbrial operon of Escherichia coli.</title>
        <authorList>
            <person name="Jordi B.J.A.M."/>
            <person name="Dagberg B."/>
            <person name="de Haan L.A.M."/>
            <person name="Hamers A.M."/>
        </authorList>
    </citation>
    <scope>FUNCTION</scope>
    <scope>INDUCTION</scope>
    <scope>DISRUPTION PHENOTYPE</scope>
    <source>
        <strain>E7473/0 / ETEC</strain>
        <plasmid>NTP113</plasmid>
    </source>
</reference>
<keyword id="KW-0010">Activator</keyword>
<keyword id="KW-0238">DNA-binding</keyword>
<keyword id="KW-0614">Plasmid</keyword>
<keyword id="KW-0804">Transcription</keyword>
<keyword id="KW-0805">Transcription regulation</keyword>
<accession>P25393</accession>
<evidence type="ECO:0000250" key="1">
    <source>
        <dbReference type="UniProtKB" id="P16114"/>
    </source>
</evidence>
<evidence type="ECO:0000255" key="2">
    <source>
        <dbReference type="PROSITE-ProRule" id="PRU00593"/>
    </source>
</evidence>
<evidence type="ECO:0000269" key="3">
    <source>
    </source>
</evidence>
<evidence type="ECO:0000269" key="4">
    <source>
    </source>
</evidence>
<evidence type="ECO:0000303" key="5">
    <source>
    </source>
</evidence>
<evidence type="ECO:0000305" key="6"/>
<proteinExistence type="evidence at transcript level"/>
<name>CFAD_ECOLX</name>
<organism>
    <name type="scientific">Escherichia coli</name>
    <dbReference type="NCBI Taxonomy" id="562"/>
    <lineage>
        <taxon>Bacteria</taxon>
        <taxon>Pseudomonadati</taxon>
        <taxon>Pseudomonadota</taxon>
        <taxon>Gammaproteobacteria</taxon>
        <taxon>Enterobacterales</taxon>
        <taxon>Enterobacteriaceae</taxon>
        <taxon>Escherichia</taxon>
    </lineage>
</organism>
<dbReference type="EMBL" id="M55609">
    <property type="protein sequence ID" value="AAA62773.1"/>
    <property type="molecule type" value="Genomic_DNA"/>
</dbReference>
<dbReference type="PIR" id="I41162">
    <property type="entry name" value="I41162"/>
</dbReference>
<dbReference type="RefSeq" id="WP_000346362.1">
    <property type="nucleotide sequence ID" value="NZ_POSQ01000105.1"/>
</dbReference>
<dbReference type="SMR" id="P25393"/>
<dbReference type="GO" id="GO:0003700">
    <property type="term" value="F:DNA-binding transcription factor activity"/>
    <property type="evidence" value="ECO:0007669"/>
    <property type="project" value="InterPro"/>
</dbReference>
<dbReference type="GO" id="GO:0043565">
    <property type="term" value="F:sequence-specific DNA binding"/>
    <property type="evidence" value="ECO:0007669"/>
    <property type="project" value="InterPro"/>
</dbReference>
<dbReference type="Gene3D" id="1.10.10.60">
    <property type="entry name" value="Homeodomain-like"/>
    <property type="match status" value="1"/>
</dbReference>
<dbReference type="InterPro" id="IPR009057">
    <property type="entry name" value="Homeodomain-like_sf"/>
</dbReference>
<dbReference type="InterPro" id="IPR018060">
    <property type="entry name" value="HTH_AraC"/>
</dbReference>
<dbReference type="InterPro" id="IPR018062">
    <property type="entry name" value="HTH_AraC-typ_CS"/>
</dbReference>
<dbReference type="InterPro" id="IPR020449">
    <property type="entry name" value="Tscrpt_reg_AraC-type_HTH"/>
</dbReference>
<dbReference type="PANTHER" id="PTHR43280">
    <property type="entry name" value="ARAC-FAMILY TRANSCRIPTIONAL REGULATOR"/>
    <property type="match status" value="1"/>
</dbReference>
<dbReference type="PANTHER" id="PTHR43280:SF11">
    <property type="entry name" value="RCS-SPECIFIC HTH-TYPE TRANSCRIPTIONAL ACTIVATOR RCLR"/>
    <property type="match status" value="1"/>
</dbReference>
<dbReference type="Pfam" id="PF12833">
    <property type="entry name" value="HTH_18"/>
    <property type="match status" value="1"/>
</dbReference>
<dbReference type="PRINTS" id="PR00032">
    <property type="entry name" value="HTHARAC"/>
</dbReference>
<dbReference type="SMART" id="SM00342">
    <property type="entry name" value="HTH_ARAC"/>
    <property type="match status" value="1"/>
</dbReference>
<dbReference type="SUPFAM" id="SSF46689">
    <property type="entry name" value="Homeodomain-like"/>
    <property type="match status" value="1"/>
</dbReference>
<dbReference type="PROSITE" id="PS00041">
    <property type="entry name" value="HTH_ARAC_FAMILY_1"/>
    <property type="match status" value="1"/>
</dbReference>
<dbReference type="PROSITE" id="PS01124">
    <property type="entry name" value="HTH_ARAC_FAMILY_2"/>
    <property type="match status" value="1"/>
</dbReference>
<sequence>MDFKYTEEKEMIKINNIMIHKYTVLYTSNCIMDIYSEEEKITCFSNRLVFLERGVNISVRIQKKILSERPYVAFRLNGDILRHLKNALMIIYGMSKVDTNDCRGMSRKIMTTEVNKTLLDELKNINSHDDSAFISSLIYLISKIENNEKIIESIYISSVSFFSDKVRNVIEKDLSRKWTLGIIADAFNVSEITIRKRLESENTNFNQILMQLRMSKAALLLLENSYQISQISNMIGISSASYFIRVFNKHYGVTPKQFFTYFKGG</sequence>
<feature type="chain" id="PRO_0000194577" description="HTH-type transcriptional activator CfaD">
    <location>
        <begin position="1"/>
        <end position="265"/>
    </location>
</feature>
<feature type="domain" description="HTH araC/xylS-type" evidence="2">
    <location>
        <begin position="164"/>
        <end position="261"/>
    </location>
</feature>
<feature type="DNA-binding region" description="H-T-H motif" evidence="2">
    <location>
        <begin position="181"/>
        <end position="202"/>
    </location>
</feature>
<feature type="DNA-binding region" description="H-T-H motif" evidence="2">
    <location>
        <begin position="228"/>
        <end position="251"/>
    </location>
</feature>
<geneLocation type="plasmid">
    <name>NTP113</name>
</geneLocation>
<geneLocation type="plasmid">
    <name>NTP503</name>
</geneLocation>
<comment type="function">
    <text evidence="3 4">Transcriptional activator of the CFA/I adhesin (cfaA and cfaB) genes of enterotoxigenic E.coli at 37 degrees Celsius (PubMed:1971911, PubMed:1378396). Also represses the silencing effect of H-NS (hns) (PubMed:1378396).</text>
</comment>
<comment type="subunit">
    <text evidence="1">Homodimer.</text>
</comment>
<comment type="induction">
    <text evidence="3">Transcribed at 37 but not 20 degrees Celsius.</text>
</comment>
<comment type="disruption phenotype">
    <text evidence="3">No longer transcribes cfaB; in a strain that also has an H-NS (hns) deletion cfaB is still transcribed.</text>
</comment>